<keyword id="KW-0229">DNA integration</keyword>
<keyword id="KW-0233">DNA recombination</keyword>
<keyword id="KW-0238">DNA-binding</keyword>
<keyword id="KW-0378">Hydrolase</keyword>
<keyword id="KW-1185">Reference proteome</keyword>
<keyword id="KW-0808">Transferase</keyword>
<keyword id="KW-1179">Viral genome integration</keyword>
<keyword id="KW-1160">Virus entry into host cell</keyword>
<gene>
    <name type="primary">33</name>
    <name type="synonym">int</name>
</gene>
<comment type="function">
    <text evidence="3 4">Integrase is necessary for integration of the phage into the host genome by site-specific recombination. In the presence of host integration host factor (mIHF) forms a specific intasome complex with attP (PubMed:8986825, PubMed:9882658). The intasome subsequently binds attB and forms integration products. mIHF probably stabilizes a sharp bend in the DNA during integration (PubMed:9882658).</text>
</comment>
<comment type="subunit">
    <text evidence="3 4">Forms a complex with host mIHF and attP DNA (phage attachment site) (PubMed:8986825, PubMed:9882658). The complex binds attB (bacterial attachment site) to form products (PubMed:9882658).</text>
</comment>
<comment type="similarity">
    <text evidence="7">Belongs to the 'phage' integrase family.</text>
</comment>
<comment type="sequence caution" evidence="7">
    <conflict type="erroneous initiation">
        <sequence resource="EMBL-CDS" id="AAA32256"/>
    </conflict>
    <text>Truncated N-terminus.</text>
</comment>
<organism>
    <name type="scientific">Mycobacterium phage L5</name>
    <name type="common">Mycobacteriophage L5</name>
    <dbReference type="NCBI Taxonomy" id="31757"/>
    <lineage>
        <taxon>Viruses</taxon>
        <taxon>Duplodnaviria</taxon>
        <taxon>Heunggongvirae</taxon>
        <taxon>Uroviricota</taxon>
        <taxon>Caudoviricetes</taxon>
        <taxon>Fromanvirus</taxon>
    </lineage>
</organism>
<dbReference type="EC" id="2.7.7.-" evidence="3 4"/>
<dbReference type="EC" id="3.1.-.-" evidence="3 4"/>
<dbReference type="EMBL" id="Z18946">
    <property type="protein sequence ID" value="CAA79409.1"/>
    <property type="molecule type" value="Genomic_DNA"/>
</dbReference>
<dbReference type="EMBL" id="M65194">
    <property type="protein sequence ID" value="AAA32256.1"/>
    <property type="status" value="ALT_INIT"/>
    <property type="molecule type" value="Genomic_DNA"/>
</dbReference>
<dbReference type="PIR" id="S30978">
    <property type="entry name" value="S30978"/>
</dbReference>
<dbReference type="RefSeq" id="NP_039697.1">
    <property type="nucleotide sequence ID" value="NC_001335.1"/>
</dbReference>
<dbReference type="SMR" id="P22884"/>
<dbReference type="GeneID" id="2942919"/>
<dbReference type="KEGG" id="vg:2942919"/>
<dbReference type="OrthoDB" id="4255at10239"/>
<dbReference type="Proteomes" id="UP000002123">
    <property type="component" value="Genome"/>
</dbReference>
<dbReference type="GO" id="GO:0003677">
    <property type="term" value="F:DNA binding"/>
    <property type="evidence" value="ECO:0007669"/>
    <property type="project" value="UniProtKB-KW"/>
</dbReference>
<dbReference type="GO" id="GO:0016787">
    <property type="term" value="F:hydrolase activity"/>
    <property type="evidence" value="ECO:0007669"/>
    <property type="project" value="UniProtKB-KW"/>
</dbReference>
<dbReference type="GO" id="GO:0008979">
    <property type="term" value="F:prophage integrase activity"/>
    <property type="evidence" value="ECO:0000314"/>
    <property type="project" value="CACAO"/>
</dbReference>
<dbReference type="GO" id="GO:0016740">
    <property type="term" value="F:transferase activity"/>
    <property type="evidence" value="ECO:0007669"/>
    <property type="project" value="UniProtKB-KW"/>
</dbReference>
<dbReference type="GO" id="GO:0006310">
    <property type="term" value="P:DNA recombination"/>
    <property type="evidence" value="ECO:0007669"/>
    <property type="project" value="UniProtKB-KW"/>
</dbReference>
<dbReference type="GO" id="GO:0046718">
    <property type="term" value="P:symbiont entry into host cell"/>
    <property type="evidence" value="ECO:0007669"/>
    <property type="project" value="UniProtKB-KW"/>
</dbReference>
<dbReference type="GO" id="GO:0044826">
    <property type="term" value="P:viral genome integration into host DNA"/>
    <property type="evidence" value="ECO:0007669"/>
    <property type="project" value="UniProtKB-KW"/>
</dbReference>
<dbReference type="CDD" id="cd00397">
    <property type="entry name" value="DNA_BRE_C"/>
    <property type="match status" value="1"/>
</dbReference>
<dbReference type="Gene3D" id="1.10.150.130">
    <property type="match status" value="1"/>
</dbReference>
<dbReference type="Gene3D" id="1.10.443.10">
    <property type="entry name" value="Intergrase catalytic core"/>
    <property type="match status" value="1"/>
</dbReference>
<dbReference type="InterPro" id="IPR044068">
    <property type="entry name" value="CB"/>
</dbReference>
<dbReference type="InterPro" id="IPR011010">
    <property type="entry name" value="DNA_brk_join_enz"/>
</dbReference>
<dbReference type="InterPro" id="IPR013762">
    <property type="entry name" value="Integrase-like_cat_sf"/>
</dbReference>
<dbReference type="InterPro" id="IPR002104">
    <property type="entry name" value="Integrase_catalytic"/>
</dbReference>
<dbReference type="InterPro" id="IPR010998">
    <property type="entry name" value="Integrase_recombinase_N"/>
</dbReference>
<dbReference type="InterPro" id="IPR050090">
    <property type="entry name" value="Tyrosine_recombinase_XerCD"/>
</dbReference>
<dbReference type="PANTHER" id="PTHR30349">
    <property type="entry name" value="PHAGE INTEGRASE-RELATED"/>
    <property type="match status" value="1"/>
</dbReference>
<dbReference type="PANTHER" id="PTHR30349:SF64">
    <property type="entry name" value="PROPHAGE INTEGRASE INTD-RELATED"/>
    <property type="match status" value="1"/>
</dbReference>
<dbReference type="Pfam" id="PF00589">
    <property type="entry name" value="Phage_integrase"/>
    <property type="match status" value="1"/>
</dbReference>
<dbReference type="SUPFAM" id="SSF56349">
    <property type="entry name" value="DNA breaking-rejoining enzymes"/>
    <property type="match status" value="1"/>
</dbReference>
<dbReference type="PROSITE" id="PS51900">
    <property type="entry name" value="CB"/>
    <property type="match status" value="1"/>
</dbReference>
<dbReference type="PROSITE" id="PS51898">
    <property type="entry name" value="TYR_RECOMBINASE"/>
    <property type="match status" value="1"/>
</dbReference>
<evidence type="ECO:0000255" key="1">
    <source>
        <dbReference type="PROSITE-ProRule" id="PRU01246"/>
    </source>
</evidence>
<evidence type="ECO:0000255" key="2">
    <source>
        <dbReference type="PROSITE-ProRule" id="PRU01248"/>
    </source>
</evidence>
<evidence type="ECO:0000269" key="3">
    <source>
    </source>
</evidence>
<evidence type="ECO:0000269" key="4">
    <source>
    </source>
</evidence>
<evidence type="ECO:0000303" key="5">
    <source>
    </source>
</evidence>
<evidence type="ECO:0000303" key="6">
    <source>
    </source>
</evidence>
<evidence type="ECO:0000305" key="7"/>
<protein>
    <recommendedName>
        <fullName>Integrase</fullName>
        <ecNumber evidence="3 4">2.7.7.-</ecNumber>
        <ecNumber evidence="3 4">3.1.-.-</ecNumber>
    </recommendedName>
    <alternativeName>
        <fullName evidence="6">Int-L5</fullName>
    </alternativeName>
    <alternativeName>
        <fullName evidence="5">L5 Int</fullName>
    </alternativeName>
</protein>
<accession>P22884</accession>
<name>VINT_BPML5</name>
<organismHost>
    <name type="scientific">Mycobacterium</name>
    <dbReference type="NCBI Taxonomy" id="1763"/>
</organismHost>
<reference key="1">
    <citation type="journal article" date="1993" name="Mol. Microbiol.">
        <title>DNA sequence, structure and gene expression of mycobacteriophage L5: a phage system for mycobacterial genetics.</title>
        <authorList>
            <person name="Hatfull G.F."/>
            <person name="Sarkis G.J."/>
        </authorList>
    </citation>
    <scope>NUCLEOTIDE SEQUENCE [LARGE SCALE GENOMIC DNA]</scope>
</reference>
<reference key="2">
    <citation type="journal article" date="1991" name="Proc. Natl. Acad. Sci. U.S.A.">
        <title>Site-specific integration of mycobacteriophage L5: integration-proficient vectors for Mycobacterium smegmatis, Mycobacterium tuberculosis, and bacille Calmette-Guerin.</title>
        <authorList>
            <person name="Lee M.H."/>
            <person name="Pascopella L."/>
            <person name="Jacobs W.R. Jr."/>
            <person name="Hatfull G.F."/>
        </authorList>
    </citation>
    <scope>NUCLEOTIDE SEQUENCE [GENOMIC DNA] OF 28-371</scope>
</reference>
<reference key="3">
    <citation type="journal article" date="1996" name="Proc. Natl. Acad. Sci. U.S.A.">
        <title>A novel host factor for integration of mycobacteriophage L5.</title>
        <authorList>
            <person name="Pedulla M.L."/>
            <person name="Lee M.H."/>
            <person name="Lever D.C."/>
            <person name="Hatfull G.F."/>
        </authorList>
    </citation>
    <scope>FUNCTION</scope>
    <scope>SUBUNIT</scope>
    <scope>DNA-BINDING</scope>
</reference>
<reference key="4">
    <citation type="journal article" date="1999" name="J. Bacteriol.">
        <title>Protein-DNA complexes in mycobacteriophage L5 integrative recombination.</title>
        <authorList>
            <person name="Pena C.E."/>
            <person name="Kahlenberg J.M."/>
            <person name="Hatfull G.F."/>
        </authorList>
    </citation>
    <scope>FUNCTION</scope>
    <scope>SUBUNIT</scope>
    <scope>DNA-BINDING</scope>
    <source>
        <strain>ATCC 700084 / mc(2)155</strain>
    </source>
</reference>
<proteinExistence type="evidence at protein level"/>
<sequence length="371" mass="41810">MARRGWGSLKTQRSGRIQASYVNPQDGVRYYALQTYDNKMDAEAWLAGEKRLIEMETWTPPQDRAKKAAASAITLEEYTRKWLVERDLADGTRDLYSGHAERRIYPVLGEVAVTEMTPALVRAWWAGMGRKHPTARRHAYNVLRAVMNTAVEDKLIAENPCRIEQKAADERDVEALTPEELDIVAAEIFEHYRIAAYILAWTSLRFGELIELRRKDIVDDGMTMKLRVRRGASRVGNKIVVGNAKTVRSKRPVTVPPHVAEMIRAHMKDRTKMNKGPEAFLVTTTQGNRLSKSAFTKSLKRGYAKIGRPELRIHDLRAVGATFAAQAGATTKELMARLGHTTPRMAMKYQMASEARDEAIAEAMSKLAKTS</sequence>
<feature type="chain" id="PRO_0000197505" description="Integrase">
    <location>
        <begin position="1"/>
        <end position="371"/>
    </location>
</feature>
<feature type="domain" description="Core-binding (CB)" evidence="2">
    <location>
        <begin position="73"/>
        <end position="151"/>
    </location>
</feature>
<feature type="domain" description="Tyr recombinase" evidence="1">
    <location>
        <begin position="171"/>
        <end position="362"/>
    </location>
</feature>
<feature type="active site" evidence="1">
    <location>
        <position position="205"/>
    </location>
</feature>
<feature type="active site" evidence="1">
    <location>
        <position position="245"/>
    </location>
</feature>
<feature type="active site" evidence="1">
    <location>
        <position position="314"/>
    </location>
</feature>
<feature type="active site" evidence="1">
    <location>
        <position position="317"/>
    </location>
</feature>
<feature type="active site" evidence="1">
    <location>
        <position position="340"/>
    </location>
</feature>
<feature type="active site" description="O-(3'-phospho-DNA)-tyrosine intermediate" evidence="1">
    <location>
        <position position="349"/>
    </location>
</feature>